<feature type="chain" id="PRO_1000203021" description="Elongation factor Tu">
    <location>
        <begin position="1"/>
        <end position="407"/>
    </location>
</feature>
<feature type="domain" description="tr-type G">
    <location>
        <begin position="10"/>
        <end position="217"/>
    </location>
</feature>
<feature type="region of interest" description="G1" evidence="1">
    <location>
        <begin position="19"/>
        <end position="26"/>
    </location>
</feature>
<feature type="region of interest" description="G2" evidence="1">
    <location>
        <begin position="60"/>
        <end position="64"/>
    </location>
</feature>
<feature type="region of interest" description="G3" evidence="1">
    <location>
        <begin position="81"/>
        <end position="84"/>
    </location>
</feature>
<feature type="region of interest" description="G4" evidence="1">
    <location>
        <begin position="136"/>
        <end position="139"/>
    </location>
</feature>
<feature type="region of interest" description="G5" evidence="1">
    <location>
        <begin position="184"/>
        <end position="186"/>
    </location>
</feature>
<feature type="binding site" evidence="2">
    <location>
        <begin position="19"/>
        <end position="26"/>
    </location>
    <ligand>
        <name>GTP</name>
        <dbReference type="ChEBI" id="CHEBI:37565"/>
    </ligand>
</feature>
<feature type="binding site" evidence="2">
    <location>
        <position position="26"/>
    </location>
    <ligand>
        <name>Mg(2+)</name>
        <dbReference type="ChEBI" id="CHEBI:18420"/>
    </ligand>
</feature>
<feature type="binding site" evidence="2">
    <location>
        <begin position="81"/>
        <end position="85"/>
    </location>
    <ligand>
        <name>GTP</name>
        <dbReference type="ChEBI" id="CHEBI:37565"/>
    </ligand>
</feature>
<feature type="binding site" evidence="2">
    <location>
        <begin position="136"/>
        <end position="139"/>
    </location>
    <ligand>
        <name>GTP</name>
        <dbReference type="ChEBI" id="CHEBI:37565"/>
    </ligand>
</feature>
<dbReference type="EC" id="3.6.5.3" evidence="2"/>
<dbReference type="EMBL" id="CP001614">
    <property type="protein sequence ID" value="ACR13794.1"/>
    <property type="molecule type" value="Genomic_DNA"/>
</dbReference>
<dbReference type="RefSeq" id="WP_015819909.1">
    <property type="nucleotide sequence ID" value="NC_012997.1"/>
</dbReference>
<dbReference type="SMR" id="C5BQ44"/>
<dbReference type="STRING" id="377629.TERTU_0889"/>
<dbReference type="KEGG" id="ttu:TERTU_0889"/>
<dbReference type="eggNOG" id="COG0050">
    <property type="taxonomic scope" value="Bacteria"/>
</dbReference>
<dbReference type="HOGENOM" id="CLU_007265_0_0_6"/>
<dbReference type="OrthoDB" id="9803139at2"/>
<dbReference type="Proteomes" id="UP000009080">
    <property type="component" value="Chromosome"/>
</dbReference>
<dbReference type="GO" id="GO:0005829">
    <property type="term" value="C:cytosol"/>
    <property type="evidence" value="ECO:0007669"/>
    <property type="project" value="TreeGrafter"/>
</dbReference>
<dbReference type="GO" id="GO:0005525">
    <property type="term" value="F:GTP binding"/>
    <property type="evidence" value="ECO:0007669"/>
    <property type="project" value="UniProtKB-UniRule"/>
</dbReference>
<dbReference type="GO" id="GO:0003924">
    <property type="term" value="F:GTPase activity"/>
    <property type="evidence" value="ECO:0007669"/>
    <property type="project" value="InterPro"/>
</dbReference>
<dbReference type="GO" id="GO:0097216">
    <property type="term" value="F:guanosine tetraphosphate binding"/>
    <property type="evidence" value="ECO:0007669"/>
    <property type="project" value="UniProtKB-ARBA"/>
</dbReference>
<dbReference type="GO" id="GO:0003746">
    <property type="term" value="F:translation elongation factor activity"/>
    <property type="evidence" value="ECO:0007669"/>
    <property type="project" value="UniProtKB-UniRule"/>
</dbReference>
<dbReference type="CDD" id="cd01884">
    <property type="entry name" value="EF_Tu"/>
    <property type="match status" value="1"/>
</dbReference>
<dbReference type="CDD" id="cd03697">
    <property type="entry name" value="EFTU_II"/>
    <property type="match status" value="1"/>
</dbReference>
<dbReference type="CDD" id="cd03707">
    <property type="entry name" value="EFTU_III"/>
    <property type="match status" value="1"/>
</dbReference>
<dbReference type="FunFam" id="2.40.30.10:FF:000001">
    <property type="entry name" value="Elongation factor Tu"/>
    <property type="match status" value="1"/>
</dbReference>
<dbReference type="FunFam" id="3.40.50.300:FF:000003">
    <property type="entry name" value="Elongation factor Tu"/>
    <property type="match status" value="1"/>
</dbReference>
<dbReference type="Gene3D" id="3.40.50.300">
    <property type="entry name" value="P-loop containing nucleotide triphosphate hydrolases"/>
    <property type="match status" value="1"/>
</dbReference>
<dbReference type="Gene3D" id="2.40.30.10">
    <property type="entry name" value="Translation factors"/>
    <property type="match status" value="2"/>
</dbReference>
<dbReference type="HAMAP" id="MF_00118_B">
    <property type="entry name" value="EF_Tu_B"/>
    <property type="match status" value="1"/>
</dbReference>
<dbReference type="InterPro" id="IPR041709">
    <property type="entry name" value="EF-Tu_GTP-bd"/>
</dbReference>
<dbReference type="InterPro" id="IPR050055">
    <property type="entry name" value="EF-Tu_GTPase"/>
</dbReference>
<dbReference type="InterPro" id="IPR004161">
    <property type="entry name" value="EFTu-like_2"/>
</dbReference>
<dbReference type="InterPro" id="IPR033720">
    <property type="entry name" value="EFTU_2"/>
</dbReference>
<dbReference type="InterPro" id="IPR031157">
    <property type="entry name" value="G_TR_CS"/>
</dbReference>
<dbReference type="InterPro" id="IPR027417">
    <property type="entry name" value="P-loop_NTPase"/>
</dbReference>
<dbReference type="InterPro" id="IPR005225">
    <property type="entry name" value="Small_GTP-bd"/>
</dbReference>
<dbReference type="InterPro" id="IPR000795">
    <property type="entry name" value="T_Tr_GTP-bd_dom"/>
</dbReference>
<dbReference type="InterPro" id="IPR009000">
    <property type="entry name" value="Transl_B-barrel_sf"/>
</dbReference>
<dbReference type="InterPro" id="IPR009001">
    <property type="entry name" value="Transl_elong_EF1A/Init_IF2_C"/>
</dbReference>
<dbReference type="InterPro" id="IPR004541">
    <property type="entry name" value="Transl_elong_EFTu/EF1A_bac/org"/>
</dbReference>
<dbReference type="InterPro" id="IPR004160">
    <property type="entry name" value="Transl_elong_EFTu/EF1A_C"/>
</dbReference>
<dbReference type="NCBIfam" id="TIGR00485">
    <property type="entry name" value="EF-Tu"/>
    <property type="match status" value="1"/>
</dbReference>
<dbReference type="NCBIfam" id="NF000766">
    <property type="entry name" value="PRK00049.1"/>
    <property type="match status" value="1"/>
</dbReference>
<dbReference type="NCBIfam" id="NF009372">
    <property type="entry name" value="PRK12735.1"/>
    <property type="match status" value="1"/>
</dbReference>
<dbReference type="NCBIfam" id="NF009373">
    <property type="entry name" value="PRK12736.1"/>
    <property type="match status" value="1"/>
</dbReference>
<dbReference type="NCBIfam" id="TIGR00231">
    <property type="entry name" value="small_GTP"/>
    <property type="match status" value="1"/>
</dbReference>
<dbReference type="PANTHER" id="PTHR43721:SF22">
    <property type="entry name" value="ELONGATION FACTOR TU, MITOCHONDRIAL"/>
    <property type="match status" value="1"/>
</dbReference>
<dbReference type="PANTHER" id="PTHR43721">
    <property type="entry name" value="ELONGATION FACTOR TU-RELATED"/>
    <property type="match status" value="1"/>
</dbReference>
<dbReference type="Pfam" id="PF00009">
    <property type="entry name" value="GTP_EFTU"/>
    <property type="match status" value="1"/>
</dbReference>
<dbReference type="Pfam" id="PF03144">
    <property type="entry name" value="GTP_EFTU_D2"/>
    <property type="match status" value="1"/>
</dbReference>
<dbReference type="Pfam" id="PF03143">
    <property type="entry name" value="GTP_EFTU_D3"/>
    <property type="match status" value="1"/>
</dbReference>
<dbReference type="PRINTS" id="PR00315">
    <property type="entry name" value="ELONGATNFCT"/>
</dbReference>
<dbReference type="SUPFAM" id="SSF50465">
    <property type="entry name" value="EF-Tu/eEF-1alpha/eIF2-gamma C-terminal domain"/>
    <property type="match status" value="1"/>
</dbReference>
<dbReference type="SUPFAM" id="SSF52540">
    <property type="entry name" value="P-loop containing nucleoside triphosphate hydrolases"/>
    <property type="match status" value="1"/>
</dbReference>
<dbReference type="SUPFAM" id="SSF50447">
    <property type="entry name" value="Translation proteins"/>
    <property type="match status" value="1"/>
</dbReference>
<dbReference type="PROSITE" id="PS00301">
    <property type="entry name" value="G_TR_1"/>
    <property type="match status" value="1"/>
</dbReference>
<dbReference type="PROSITE" id="PS51722">
    <property type="entry name" value="G_TR_2"/>
    <property type="match status" value="1"/>
</dbReference>
<keyword id="KW-0963">Cytoplasm</keyword>
<keyword id="KW-0251">Elongation factor</keyword>
<keyword id="KW-0342">GTP-binding</keyword>
<keyword id="KW-0378">Hydrolase</keyword>
<keyword id="KW-0460">Magnesium</keyword>
<keyword id="KW-0479">Metal-binding</keyword>
<keyword id="KW-0547">Nucleotide-binding</keyword>
<keyword id="KW-0648">Protein biosynthesis</keyword>
<keyword id="KW-1185">Reference proteome</keyword>
<comment type="function">
    <text evidence="2">GTP hydrolase that promotes the GTP-dependent binding of aminoacyl-tRNA to the A-site of ribosomes during protein biosynthesis.</text>
</comment>
<comment type="catalytic activity">
    <reaction evidence="2">
        <text>GTP + H2O = GDP + phosphate + H(+)</text>
        <dbReference type="Rhea" id="RHEA:19669"/>
        <dbReference type="ChEBI" id="CHEBI:15377"/>
        <dbReference type="ChEBI" id="CHEBI:15378"/>
        <dbReference type="ChEBI" id="CHEBI:37565"/>
        <dbReference type="ChEBI" id="CHEBI:43474"/>
        <dbReference type="ChEBI" id="CHEBI:58189"/>
        <dbReference type="EC" id="3.6.5.3"/>
    </reaction>
    <physiologicalReaction direction="left-to-right" evidence="2">
        <dbReference type="Rhea" id="RHEA:19670"/>
    </physiologicalReaction>
</comment>
<comment type="subunit">
    <text evidence="2">Monomer.</text>
</comment>
<comment type="subcellular location">
    <subcellularLocation>
        <location evidence="2">Cytoplasm</location>
    </subcellularLocation>
</comment>
<comment type="similarity">
    <text evidence="2">Belongs to the TRAFAC class translation factor GTPase superfamily. Classic translation factor GTPase family. EF-Tu/EF-1A subfamily.</text>
</comment>
<sequence length="407" mass="44279">MAKEKFERSKPHVNVGTIGHVDHGKTTLTAALTRVCSEVWGGAAVAFDGIDNAPEEKERGITIATSHVEYDSPTRHYAHVDCPGHADYVKNMITGAAQMDGAILVCGATDGPMPQTREHILLSRQVGVPYIVVFLNKADLLAEDCGGVGTDEYNEMLELVEMELRELLDTYEFPGDDTPIIPGSALMALNGEDDNELGTSAVRKLVETLDEYIPEPERAIDQPFLMPIEDVFSISGRGTVVTGRVERGIVKVGEEIEIVGINATTKTTCTGVEMFRKLLDEGRAGENVGVLLRGTKRDEVERGQVLAKPGTITPHTVFQSEVYVLSKDEGGRHTPFFKGYRPQFYFRTTDVTGACELPEGVEMVMPGDNIQMTVTLIAPIAMEEGLRFAIREGGRTVGAGVVAKIIE</sequence>
<name>EFTU_TERTT</name>
<accession>C5BQ44</accession>
<evidence type="ECO:0000250" key="1"/>
<evidence type="ECO:0000255" key="2">
    <source>
        <dbReference type="HAMAP-Rule" id="MF_00118"/>
    </source>
</evidence>
<protein>
    <recommendedName>
        <fullName evidence="2">Elongation factor Tu</fullName>
        <shortName evidence="2">EF-Tu</shortName>
        <ecNumber evidence="2">3.6.5.3</ecNumber>
    </recommendedName>
</protein>
<gene>
    <name evidence="2" type="primary">tuf</name>
    <name type="ordered locus">TERTU_0889</name>
</gene>
<proteinExistence type="inferred from homology"/>
<reference key="1">
    <citation type="journal article" date="2009" name="PLoS ONE">
        <title>The complete genome of Teredinibacter turnerae T7901: an intracellular endosymbiont of marine wood-boring bivalves (shipworms).</title>
        <authorList>
            <person name="Yang J.C."/>
            <person name="Madupu R."/>
            <person name="Durkin A.S."/>
            <person name="Ekborg N.A."/>
            <person name="Pedamallu C.S."/>
            <person name="Hostetler J.B."/>
            <person name="Radune D."/>
            <person name="Toms B.S."/>
            <person name="Henrissat B."/>
            <person name="Coutinho P.M."/>
            <person name="Schwarz S."/>
            <person name="Field L."/>
            <person name="Trindade-Silva A.E."/>
            <person name="Soares C.A.G."/>
            <person name="Elshahawi S."/>
            <person name="Hanora A."/>
            <person name="Schmidt E.W."/>
            <person name="Haygood M.G."/>
            <person name="Posfai J."/>
            <person name="Benner J."/>
            <person name="Madinger C."/>
            <person name="Nove J."/>
            <person name="Anton B."/>
            <person name="Chaudhary K."/>
            <person name="Foster J."/>
            <person name="Holman A."/>
            <person name="Kumar S."/>
            <person name="Lessard P.A."/>
            <person name="Luyten Y.A."/>
            <person name="Slatko B."/>
            <person name="Wood N."/>
            <person name="Wu B."/>
            <person name="Teplitski M."/>
            <person name="Mougous J.D."/>
            <person name="Ward N."/>
            <person name="Eisen J.A."/>
            <person name="Badger J.H."/>
            <person name="Distel D.L."/>
        </authorList>
    </citation>
    <scope>NUCLEOTIDE SEQUENCE [LARGE SCALE GENOMIC DNA]</scope>
    <source>
        <strain>ATCC 39867 / T7901</strain>
    </source>
</reference>
<organism>
    <name type="scientific">Teredinibacter turnerae (strain ATCC 39867 / T7901)</name>
    <dbReference type="NCBI Taxonomy" id="377629"/>
    <lineage>
        <taxon>Bacteria</taxon>
        <taxon>Pseudomonadati</taxon>
        <taxon>Pseudomonadota</taxon>
        <taxon>Gammaproteobacteria</taxon>
        <taxon>Cellvibrionales</taxon>
        <taxon>Cellvibrionaceae</taxon>
        <taxon>Teredinibacter</taxon>
    </lineage>
</organism>